<accession>P21997</accession>
<dbReference type="EMBL" id="X51616">
    <property type="protein sequence ID" value="CAA35953.1"/>
    <property type="molecule type" value="mRNA"/>
</dbReference>
<dbReference type="PIR" id="A33647">
    <property type="entry name" value="A33647"/>
</dbReference>
<dbReference type="InterPro" id="IPR024616">
    <property type="entry name" value="Pherophorin"/>
</dbReference>
<dbReference type="Pfam" id="PF12499">
    <property type="entry name" value="DUF3707"/>
    <property type="match status" value="2"/>
</dbReference>
<dbReference type="PRINTS" id="PR01217">
    <property type="entry name" value="PRICHEXTENSN"/>
</dbReference>
<organism>
    <name type="scientific">Volvox carteri</name>
    <name type="common">Green alga</name>
    <dbReference type="NCBI Taxonomy" id="3067"/>
    <lineage>
        <taxon>Eukaryota</taxon>
        <taxon>Viridiplantae</taxon>
        <taxon>Chlorophyta</taxon>
        <taxon>core chlorophytes</taxon>
        <taxon>Chlorophyceae</taxon>
        <taxon>CS clade</taxon>
        <taxon>Chlamydomonadales</taxon>
        <taxon>Volvocaceae</taxon>
        <taxon>Volvox</taxon>
    </lineage>
</organism>
<comment type="function">
    <text>The extracellular matrix (ECM) of Volvox contains insoluble fibrous layers that surround individual cells at a distance to form contiguous cellular compartments. SSG 185 is the monomeric precursor of this substructure (C3Z structure).</text>
</comment>
<comment type="subunit">
    <text>Polymer.</text>
</comment>
<comment type="PTM">
    <text>Intersubunit cross-links are formed between saccharide chains rather than between polypeptide chains.</text>
</comment>
<comment type="PTM">
    <text>Hydroxylated on proline residues in the Pro-rich central domain.</text>
</comment>
<comment type="PTM">
    <text>Glycosylated; contains sulfate-substituted glycans.</text>
</comment>
<protein>
    <recommendedName>
        <fullName>Sulfated surface glycoprotein 185</fullName>
        <shortName>SSG 185</shortName>
    </recommendedName>
</protein>
<evidence type="ECO:0000255" key="1"/>
<evidence type="ECO:0000256" key="2">
    <source>
        <dbReference type="SAM" id="MobiDB-lite"/>
    </source>
</evidence>
<reference key="1">
    <citation type="journal article" date="1989" name="J. Cell Biol.">
        <title>The extracellular matrix of Volvox carteri: molecular structure of the cellular compartment.</title>
        <authorList>
            <person name="Ertl H."/>
            <person name="Mengele R."/>
            <person name="Wenzl S."/>
            <person name="Engel J."/>
            <person name="Sumper M."/>
        </authorList>
    </citation>
    <scope>NUCLEOTIDE SEQUENCE [MRNA]</scope>
    <scope>PARTIAL PROTEIN SEQUENCE</scope>
    <source>
        <strain>f. Nagariensis / HK10</strain>
    </source>
</reference>
<proteinExistence type="evidence at protein level"/>
<keyword id="KW-0903">Direct protein sequencing</keyword>
<keyword id="KW-0325">Glycoprotein</keyword>
<keyword id="KW-0379">Hydroxylation</keyword>
<keyword id="KW-0732">Signal</keyword>
<name>SSGP_VOLCA</name>
<sequence>MSKLLLVALFGAIAVVATSAEVLNLNGRSLLNNDDPNAFPYCKCTYRQRRSPYRLKYVGAENNYKGNDWLCYSIVLDTTGTVCQTVPLTEPCCSADLYKIEFDVKPSCKGTVTRAMVFKGIDRTVGGVRVLESISTVGIDDVTGVPGAAILRIVKDLALPYSVVASFLPNGLPVCINRVPGSCTFPELFMDVNGTASYSVFNSDKDCCPTGLSGPNVNPIGPAPNNSPLPPSPQPTASSRPPSPPPSPRPPSPPPPSPSPPPPPPPPPPPPPPPPPSPPPPPPPPPPPPPPPPPPSPSPPRKPPSPSPPVPPPPSPPSVLPAATGFPFCECVSRSPSSYPWRVTVANVSAVTISGGAGERVCLKISVDNAAAATCNNGLGGCCSDGLEKVELFANGKCKGSILPFTLSNTAEIRSSFSWDSTRPVLKFTRLGLTYAQGVAGGSLCFNIKGAGCTKFADLCPGRGCTVAVFNNPDNTCCPRVGTIA</sequence>
<feature type="signal peptide" evidence="1">
    <location>
        <begin position="1"/>
        <end position="20"/>
    </location>
</feature>
<feature type="chain" id="PRO_0000022421" description="Sulfated surface glycoprotein 185">
    <location>
        <begin position="21"/>
        <end position="485"/>
    </location>
</feature>
<feature type="region of interest" description="Disordered" evidence="2">
    <location>
        <begin position="212"/>
        <end position="317"/>
    </location>
</feature>
<feature type="compositionally biased region" description="Pro residues" evidence="2">
    <location>
        <begin position="221"/>
        <end position="234"/>
    </location>
</feature>
<feature type="compositionally biased region" description="Pro residues" evidence="2">
    <location>
        <begin position="241"/>
        <end position="317"/>
    </location>
</feature>
<feature type="glycosylation site" description="N-linked (GlcNAc...) asparagine" evidence="1">
    <location>
        <position position="193"/>
    </location>
</feature>
<feature type="glycosylation site" description="N-linked (GlcNAc...) asparagine" evidence="1">
    <location>
        <position position="347"/>
    </location>
</feature>